<evidence type="ECO:0000250" key="1">
    <source>
        <dbReference type="UniProtKB" id="P00568"/>
    </source>
</evidence>
<evidence type="ECO:0000255" key="2">
    <source>
        <dbReference type="HAMAP-Rule" id="MF_03171"/>
    </source>
</evidence>
<evidence type="ECO:0000269" key="3">
    <source>
    </source>
</evidence>
<evidence type="ECO:0000269" key="4">
    <source>
    </source>
</evidence>
<evidence type="ECO:0000269" key="5">
    <source>
    </source>
</evidence>
<evidence type="ECO:0000269" key="6">
    <source>
    </source>
</evidence>
<evidence type="ECO:0000269" key="7">
    <source>
    </source>
</evidence>
<evidence type="ECO:0000305" key="8">
    <source>
    </source>
</evidence>
<sequence length="194" mass="21683">MSTEKLKHHKIIFVVGGPGSGKGTQCEKIVHKYGYTHLSTGDLLRAEVSSGSERGKKLQAIMEKGELVPLDTVLDMLRDAMLAKADTSKGFLIDGYPREVKQGEEFEKKIAPPTLLLYVDAGKETMVKRLLKRGETSGRVDDNEETIKKRLETYYKATEPVIAFYKGRGIVRQLNAEGTVDEVFQQVCSYLDKL</sequence>
<name>KAD1_CHICK</name>
<feature type="chain" id="PRO_0000158915" description="Adenylate kinase isoenzyme 1">
    <location>
        <begin position="1"/>
        <end position="194"/>
    </location>
</feature>
<feature type="region of interest" description="NMP" evidence="2">
    <location>
        <begin position="39"/>
        <end position="68"/>
    </location>
</feature>
<feature type="region of interest" description="LID" evidence="2">
    <location>
        <begin position="132"/>
        <end position="142"/>
    </location>
</feature>
<feature type="binding site" evidence="2">
    <location>
        <begin position="19"/>
        <end position="24"/>
    </location>
    <ligand>
        <name>ATP</name>
        <dbReference type="ChEBI" id="CHEBI:30616"/>
    </ligand>
</feature>
<feature type="binding site" evidence="2">
    <location>
        <position position="40"/>
    </location>
    <ligand>
        <name>AMP</name>
        <dbReference type="ChEBI" id="CHEBI:456215"/>
    </ligand>
</feature>
<feature type="binding site" evidence="2">
    <location>
        <position position="45"/>
    </location>
    <ligand>
        <name>AMP</name>
        <dbReference type="ChEBI" id="CHEBI:456215"/>
    </ligand>
</feature>
<feature type="binding site" evidence="2">
    <location>
        <begin position="66"/>
        <end position="68"/>
    </location>
    <ligand>
        <name>AMP</name>
        <dbReference type="ChEBI" id="CHEBI:456215"/>
    </ligand>
</feature>
<feature type="binding site" evidence="2">
    <location>
        <begin position="95"/>
        <end position="98"/>
    </location>
    <ligand>
        <name>AMP</name>
        <dbReference type="ChEBI" id="CHEBI:456215"/>
    </ligand>
</feature>
<feature type="binding site" evidence="2">
    <location>
        <position position="102"/>
    </location>
    <ligand>
        <name>AMP</name>
        <dbReference type="ChEBI" id="CHEBI:456215"/>
    </ligand>
</feature>
<feature type="binding site" evidence="2">
    <location>
        <position position="133"/>
    </location>
    <ligand>
        <name>ATP</name>
        <dbReference type="ChEBI" id="CHEBI:30616"/>
    </ligand>
</feature>
<feature type="binding site" evidence="2">
    <location>
        <position position="139"/>
    </location>
    <ligand>
        <name>AMP</name>
        <dbReference type="ChEBI" id="CHEBI:456215"/>
    </ligand>
</feature>
<feature type="binding site" evidence="2">
    <location>
        <position position="150"/>
    </location>
    <ligand>
        <name>AMP</name>
        <dbReference type="ChEBI" id="CHEBI:456215"/>
    </ligand>
</feature>
<feature type="binding site" evidence="2">
    <location>
        <position position="178"/>
    </location>
    <ligand>
        <name>ATP</name>
        <dbReference type="ChEBI" id="CHEBI:30616"/>
    </ligand>
</feature>
<feature type="mutagenesis site" description="Reduced activity." evidence="4">
    <original>K</original>
    <variation>M</variation>
    <location>
        <position position="22"/>
    </location>
</feature>
<feature type="mutagenesis site" description="No loss in activity." evidence="4">
    <original>K</original>
    <variation>M</variation>
    <location>
        <position position="28"/>
    </location>
</feature>
<feature type="mutagenesis site" description="Reduced enzyme activity. Decreased Km values for ADP." evidence="7">
    <original>R</original>
    <variation>A</variation>
    <location>
        <position position="129"/>
    </location>
</feature>
<feature type="mutagenesis site" description="Reduced enzyme activity. Increased Km value for ATP, AMP and ADP. Km value for ThDP decreased to about one fifth of that of the wild-type enzyme." evidence="6 7">
    <original>R</original>
    <variation>W</variation>
    <location>
        <position position="129"/>
    </location>
</feature>
<gene>
    <name evidence="2" type="primary">AK1</name>
</gene>
<comment type="function">
    <text evidence="1 2 3 4 5 6 7">Catalyzes the reversible transfer of the terminal phosphate group between ATP and AMP (PubMed:1958702, PubMed:2161682, PubMed:2229026, PubMed:2542324). Also displays broad nucleoside diphosphate kinase activity. Plays an important role in cellular energy homeostasis and in adenine nucleotide metabolism (By similarity). Also catalyzes at a very low rate the synthesis of thiamine triphosphate (ThTP) from thiamine diphosphate (ThDP) and ADP (PubMed:2229026, PubMed:8431472).</text>
</comment>
<comment type="catalytic activity">
    <reaction evidence="3 4 6 7">
        <text>a ribonucleoside 5'-phosphate + ATP = a ribonucleoside 5'-diphosphate + ADP</text>
        <dbReference type="Rhea" id="RHEA:24036"/>
        <dbReference type="ChEBI" id="CHEBI:30616"/>
        <dbReference type="ChEBI" id="CHEBI:57930"/>
        <dbReference type="ChEBI" id="CHEBI:58043"/>
        <dbReference type="ChEBI" id="CHEBI:456216"/>
        <dbReference type="EC" id="2.7.4.4"/>
    </reaction>
</comment>
<comment type="catalytic activity">
    <reaction evidence="2 3 4 6 7">
        <text>AMP + ATP = 2 ADP</text>
        <dbReference type="Rhea" id="RHEA:12973"/>
        <dbReference type="ChEBI" id="CHEBI:30616"/>
        <dbReference type="ChEBI" id="CHEBI:456215"/>
        <dbReference type="ChEBI" id="CHEBI:456216"/>
        <dbReference type="EC" id="2.7.4.3"/>
    </reaction>
</comment>
<comment type="catalytic activity">
    <reaction evidence="4">
        <text>dAMP + ATP = dADP + ADP</text>
        <dbReference type="Rhea" id="RHEA:23100"/>
        <dbReference type="ChEBI" id="CHEBI:30616"/>
        <dbReference type="ChEBI" id="CHEBI:57667"/>
        <dbReference type="ChEBI" id="CHEBI:58245"/>
        <dbReference type="ChEBI" id="CHEBI:456216"/>
    </reaction>
</comment>
<comment type="catalytic activity">
    <reaction evidence="4">
        <text>dATP + AMP = dADP + ADP</text>
        <dbReference type="Rhea" id="RHEA:79899"/>
        <dbReference type="ChEBI" id="CHEBI:57667"/>
        <dbReference type="ChEBI" id="CHEBI:61404"/>
        <dbReference type="ChEBI" id="CHEBI:456215"/>
        <dbReference type="ChEBI" id="CHEBI:456216"/>
    </reaction>
</comment>
<comment type="catalytic activity">
    <reaction evidence="4">
        <text>dAMP + dATP = 2 dADP</text>
        <dbReference type="Rhea" id="RHEA:78311"/>
        <dbReference type="ChEBI" id="CHEBI:57667"/>
        <dbReference type="ChEBI" id="CHEBI:58245"/>
        <dbReference type="ChEBI" id="CHEBI:61404"/>
    </reaction>
</comment>
<comment type="catalytic activity">
    <reaction evidence="1 2">
        <text>a 2'-deoxyribonucleoside 5'-diphosphate + ATP = a 2'-deoxyribonucleoside 5'-triphosphate + ADP</text>
        <dbReference type="Rhea" id="RHEA:44640"/>
        <dbReference type="ChEBI" id="CHEBI:30616"/>
        <dbReference type="ChEBI" id="CHEBI:61560"/>
        <dbReference type="ChEBI" id="CHEBI:73316"/>
        <dbReference type="ChEBI" id="CHEBI:456216"/>
        <dbReference type="EC" id="2.7.4.6"/>
    </reaction>
</comment>
<comment type="catalytic activity">
    <reaction evidence="1">
        <text>a ribonucleoside 5'-diphosphate + ATP = a ribonucleoside 5'-triphosphate + ADP</text>
        <dbReference type="Rhea" id="RHEA:18113"/>
        <dbReference type="ChEBI" id="CHEBI:30616"/>
        <dbReference type="ChEBI" id="CHEBI:57930"/>
        <dbReference type="ChEBI" id="CHEBI:61557"/>
        <dbReference type="ChEBI" id="CHEBI:456216"/>
        <dbReference type="EC" id="2.7.4.6"/>
    </reaction>
</comment>
<comment type="catalytic activity">
    <reaction evidence="1">
        <text>CDP + GTP = CTP + GDP</text>
        <dbReference type="Rhea" id="RHEA:79859"/>
        <dbReference type="ChEBI" id="CHEBI:37563"/>
        <dbReference type="ChEBI" id="CHEBI:37565"/>
        <dbReference type="ChEBI" id="CHEBI:58069"/>
        <dbReference type="ChEBI" id="CHEBI:58189"/>
    </reaction>
</comment>
<comment type="catalytic activity">
    <reaction evidence="1">
        <text>GDP + ATP = GTP + ADP</text>
        <dbReference type="Rhea" id="RHEA:27686"/>
        <dbReference type="ChEBI" id="CHEBI:30616"/>
        <dbReference type="ChEBI" id="CHEBI:37565"/>
        <dbReference type="ChEBI" id="CHEBI:58189"/>
        <dbReference type="ChEBI" id="CHEBI:456216"/>
        <dbReference type="EC" id="2.7.4.6"/>
    </reaction>
</comment>
<comment type="catalytic activity">
    <reaction evidence="1">
        <text>UDP + ATP = UTP + ADP</text>
        <dbReference type="Rhea" id="RHEA:25098"/>
        <dbReference type="ChEBI" id="CHEBI:30616"/>
        <dbReference type="ChEBI" id="CHEBI:46398"/>
        <dbReference type="ChEBI" id="CHEBI:58223"/>
        <dbReference type="ChEBI" id="CHEBI:456216"/>
        <dbReference type="EC" id="2.7.4.6"/>
    </reaction>
</comment>
<comment type="catalytic activity">
    <reaction evidence="1">
        <text>GTP + UDP = UTP + GDP</text>
        <dbReference type="Rhea" id="RHEA:79863"/>
        <dbReference type="ChEBI" id="CHEBI:37565"/>
        <dbReference type="ChEBI" id="CHEBI:46398"/>
        <dbReference type="ChEBI" id="CHEBI:58189"/>
        <dbReference type="ChEBI" id="CHEBI:58223"/>
    </reaction>
</comment>
<comment type="catalytic activity">
    <reaction evidence="1">
        <text>dTDP + GTP = dTTP + GDP</text>
        <dbReference type="Rhea" id="RHEA:79867"/>
        <dbReference type="ChEBI" id="CHEBI:37565"/>
        <dbReference type="ChEBI" id="CHEBI:37568"/>
        <dbReference type="ChEBI" id="CHEBI:58189"/>
        <dbReference type="ChEBI" id="CHEBI:58369"/>
    </reaction>
</comment>
<comment type="catalytic activity">
    <reaction evidence="1">
        <text>dCDP + GTP = dCTP + GDP</text>
        <dbReference type="Rhea" id="RHEA:79875"/>
        <dbReference type="ChEBI" id="CHEBI:37565"/>
        <dbReference type="ChEBI" id="CHEBI:58189"/>
        <dbReference type="ChEBI" id="CHEBI:58593"/>
        <dbReference type="ChEBI" id="CHEBI:61481"/>
    </reaction>
</comment>
<comment type="catalytic activity">
    <reaction evidence="1">
        <text>dGDP + ATP = dGTP + ADP</text>
        <dbReference type="Rhea" id="RHEA:27690"/>
        <dbReference type="ChEBI" id="CHEBI:30616"/>
        <dbReference type="ChEBI" id="CHEBI:58595"/>
        <dbReference type="ChEBI" id="CHEBI:61429"/>
        <dbReference type="ChEBI" id="CHEBI:456216"/>
        <dbReference type="EC" id="2.7.4.6"/>
    </reaction>
</comment>
<comment type="catalytic activity">
    <reaction evidence="1">
        <text>dADP + GTP = dATP + GDP</text>
        <dbReference type="Rhea" id="RHEA:79871"/>
        <dbReference type="ChEBI" id="CHEBI:37565"/>
        <dbReference type="ChEBI" id="CHEBI:57667"/>
        <dbReference type="ChEBI" id="CHEBI:58189"/>
        <dbReference type="ChEBI" id="CHEBI:61404"/>
    </reaction>
</comment>
<comment type="catalytic activity">
    <reaction evidence="3 5 7">
        <text>thiamine diphosphate + ADP = thiamine triphosphate + AMP</text>
        <dbReference type="Rhea" id="RHEA:69180"/>
        <dbReference type="ChEBI" id="CHEBI:58937"/>
        <dbReference type="ChEBI" id="CHEBI:58938"/>
        <dbReference type="ChEBI" id="CHEBI:456215"/>
        <dbReference type="ChEBI" id="CHEBI:456216"/>
    </reaction>
</comment>
<comment type="cofactor">
    <cofactor evidence="8">
        <name>Mg(2+)</name>
        <dbReference type="ChEBI" id="CHEBI:18420"/>
    </cofactor>
</comment>
<comment type="biophysicochemical properties">
    <kinetics>
        <KM evidence="6">0.17 mM for ATP</KM>
        <KM evidence="6">0.6 mM for ADP</KM>
        <KM evidence="6">0.17 mM for AMP</KM>
        <KM evidence="4">0.094 mM for AMP</KM>
        <KM evidence="5">2.25 mM for ThDP</KM>
        <KM evidence="3 7">2.3 mM for ThDP</KM>
        <KM evidence="7">0.17 mM for ADP</KM>
        <Vmax evidence="3">1.9 umol/h/mg enzyme for ThDP</Vmax>
        <Vmax evidence="7">1900.0 nmol/h/mg enzyme for ThDP</Vmax>
        <Vmax evidence="7">1000.0 umol/min/mg enzyme for ADP</Vmax>
    </kinetics>
    <phDependence>
        <text evidence="3 7">Optimum pH is 9.0 for ThTP synthesis.</text>
    </phDependence>
    <temperatureDependence>
        <text evidence="3 7">Thermostable.</text>
    </temperatureDependence>
</comment>
<comment type="subunit">
    <text evidence="1 2">Monomer.</text>
</comment>
<comment type="subcellular location">
    <subcellularLocation>
        <location evidence="5">Cytoplasm</location>
    </subcellularLocation>
</comment>
<comment type="tissue specificity">
    <text evidence="5">Skeletal muscle.</text>
</comment>
<comment type="domain">
    <text evidence="1 2">Consists of three domains, a large central CORE domain and two small peripheral domains, NMPbind and LID, which undergo movements during catalysis. The LID domain closes over the site of phosphoryl transfer upon ATP binding. Assembling and dissambling the active center during each catalytic cycle provides an effective means to prevent ATP hydrolysis.</text>
</comment>
<comment type="similarity">
    <text evidence="2">Belongs to the adenylate kinase family. AK1 subfamily.</text>
</comment>
<protein>
    <recommendedName>
        <fullName evidence="2">Adenylate kinase isoenzyme 1</fullName>
        <shortName evidence="2">AK 1</shortName>
        <ecNumber evidence="2 3 4 6 7">2.7.4.3</ecNumber>
        <ecNumber evidence="3 4 6 7">2.7.4.4</ecNumber>
        <ecNumber evidence="1 2">2.7.4.6</ecNumber>
    </recommendedName>
    <alternativeName>
        <fullName evidence="2">ATP-AMP transphosphorylase 1</fullName>
    </alternativeName>
    <alternativeName>
        <fullName evidence="2">ATP:AMP phosphotransferase</fullName>
    </alternativeName>
    <alternativeName>
        <fullName evidence="2">Adenylate monophosphate kinase</fullName>
    </alternativeName>
    <alternativeName>
        <fullName evidence="2">Myokinase</fullName>
    </alternativeName>
</protein>
<reference key="1">
    <citation type="journal article" date="1986" name="J. Biol. Chem.">
        <title>Isolation and characterization of cDNA for chicken muscle adenylate kinase.</title>
        <authorList>
            <person name="Kishi F."/>
            <person name="Maruyama M."/>
            <person name="Tanizawa Y."/>
            <person name="Nakazawa A."/>
        </authorList>
    </citation>
    <scope>NUCLEOTIDE SEQUENCE [MRNA]</scope>
    <source>
        <tissue>Muscle</tissue>
    </source>
</reference>
<reference key="2">
    <citation type="journal article" date="1988" name="J. Biochem.">
        <title>Structure and complete nucleotide sequence of the gene encoding chicken cytosolic adenylate kinase.</title>
        <authorList>
            <person name="Suminami Y."/>
            <person name="Kishi F."/>
            <person name="Torigoe T."/>
            <person name="Nakazawa A."/>
        </authorList>
    </citation>
    <scope>NUCLEOTIDE SEQUENCE [GENOMIC DNA]</scope>
    <source>
        <tissue>Muscle</tissue>
    </source>
</reference>
<reference key="3">
    <citation type="journal article" date="1990" name="Biochemistry">
        <title>Mechanism of adenylate kinase. Are the essential lysines essential?</title>
        <authorList>
            <person name="Tian G.C."/>
            <person name="Yan H.G."/>
            <person name="Jiang R.T."/>
            <person name="Kishi F."/>
            <person name="Nakazawa A."/>
            <person name="Tsai M.D."/>
        </authorList>
    </citation>
    <scope>MUTAGENESIS OF LYS-22 AND LYS-28</scope>
    <scope>FUNCTION</scope>
    <scope>CATALYTIC ACTIVITY</scope>
    <scope>BIOPHYSICOCHEMICAL PROPERTIES</scope>
</reference>
<reference key="4">
    <citation type="journal article" date="1990" name="J. Biochem.">
        <title>Evidence for in vivo synthesis of thiamin triphosphate by cytosolic adenylate kinase in chicken skeletal muscle.</title>
        <authorList>
            <person name="Miyoshi K."/>
            <person name="Egi Y."/>
            <person name="Shioda T."/>
            <person name="Kawasaki T."/>
        </authorList>
    </citation>
    <scope>FUNCTION</scope>
    <scope>CATALYTIC ACTIVITY</scope>
    <scope>BIOPHYSICOCHEMICAL PROPERTIES</scope>
    <scope>SUBCELLULAR LOCATION</scope>
    <scope>TISSUE SPECIFICITY</scope>
</reference>
<reference key="5">
    <citation type="journal article" date="1989" name="J. Biol. Chem.">
        <title>Human adenylate kinase deficiency associated with hemolytic anemia. A single base substitution affecting solubility and catalytic activity of the cytosolic adenylate kinase.</title>
        <authorList>
            <person name="Matsuura S."/>
            <person name="Igarashi M."/>
            <person name="Tanizawa Y."/>
            <person name="Yamada M."/>
            <person name="Kishi F."/>
            <person name="Kajii T."/>
            <person name="Fujii H."/>
            <person name="Miwa S."/>
            <person name="Sakurai M."/>
            <person name="Nakazawa A."/>
        </authorList>
    </citation>
    <scope>FUNCTION</scope>
    <scope>CATALYTIC ACTIVITY</scope>
    <scope>BIOPHYSICOCHEMICAL PROPERTIES</scope>
    <scope>MUTAGENESIS OF ARG-129</scope>
</reference>
<reference key="6">
    <citation type="journal article" date="1991" name="Biochim. Biophys. Acta">
        <title>Properties of thiamin triphosphate-synthesizing activity of chicken cytosolic adenylate kinase and the effect of adenine nucleotides.</title>
        <authorList>
            <person name="Shioda T."/>
            <person name="Egi Y."/>
            <person name="Yamada K."/>
            <person name="Kawasaki T."/>
        </authorList>
    </citation>
    <scope>FUNCTION</scope>
    <scope>CATALYTIC ACTIVITY</scope>
    <scope>BIOPHYSICOCHEMICAL PROPERTIES</scope>
    <scope>COFACTOR</scope>
</reference>
<reference key="7">
    <citation type="journal article" date="1993" name="Biochim. Biophys. Acta">
        <title>Thiamin-triphosphate-synthesizing activity of mutant cytosolic adenylate kinases: significance of Arg-128 for substrate specificity.</title>
        <authorList>
            <person name="Shioda T."/>
            <person name="Yasuda S."/>
            <person name="Yamada K."/>
            <person name="Yamada M."/>
            <person name="Nakazawa A."/>
            <person name="Kawasaki T."/>
        </authorList>
    </citation>
    <scope>FUNCTION</scope>
    <scope>CATALYTIC ACTIVITY</scope>
    <scope>BIOPHYSICOCHEMICAL PROPERTIES</scope>
    <scope>MUTAGENESIS OF ARG-129</scope>
</reference>
<keyword id="KW-0067">ATP-binding</keyword>
<keyword id="KW-0963">Cytoplasm</keyword>
<keyword id="KW-0418">Kinase</keyword>
<keyword id="KW-0547">Nucleotide-binding</keyword>
<keyword id="KW-1185">Reference proteome</keyword>
<keyword id="KW-0808">Transferase</keyword>
<accession>P05081</accession>
<organism>
    <name type="scientific">Gallus gallus</name>
    <name type="common">Chicken</name>
    <dbReference type="NCBI Taxonomy" id="9031"/>
    <lineage>
        <taxon>Eukaryota</taxon>
        <taxon>Metazoa</taxon>
        <taxon>Chordata</taxon>
        <taxon>Craniata</taxon>
        <taxon>Vertebrata</taxon>
        <taxon>Euteleostomi</taxon>
        <taxon>Archelosauria</taxon>
        <taxon>Archosauria</taxon>
        <taxon>Dinosauria</taxon>
        <taxon>Saurischia</taxon>
        <taxon>Theropoda</taxon>
        <taxon>Coelurosauria</taxon>
        <taxon>Aves</taxon>
        <taxon>Neognathae</taxon>
        <taxon>Galloanserae</taxon>
        <taxon>Galliformes</taxon>
        <taxon>Phasianidae</taxon>
        <taxon>Phasianinae</taxon>
        <taxon>Gallus</taxon>
    </lineage>
</organism>
<proteinExistence type="evidence at protein level"/>
<dbReference type="EC" id="2.7.4.3" evidence="2 3 4 6 7"/>
<dbReference type="EC" id="2.7.4.4" evidence="3 4 6 7"/>
<dbReference type="EC" id="2.7.4.6" evidence="1 2"/>
<dbReference type="EMBL" id="M12153">
    <property type="protein sequence ID" value="AAB59961.1"/>
    <property type="molecule type" value="mRNA"/>
</dbReference>
<dbReference type="EMBL" id="D00251">
    <property type="protein sequence ID" value="BAA00182.1"/>
    <property type="molecule type" value="Genomic_DNA"/>
</dbReference>
<dbReference type="PIR" id="A25327">
    <property type="entry name" value="A25327"/>
</dbReference>
<dbReference type="RefSeq" id="NP_990440.1">
    <property type="nucleotide sequence ID" value="NM_205109.3"/>
</dbReference>
<dbReference type="RefSeq" id="XP_025011798.1">
    <property type="nucleotide sequence ID" value="XM_025156030.3"/>
</dbReference>
<dbReference type="RefSeq" id="XP_040504890.1">
    <property type="nucleotide sequence ID" value="XM_040648956.2"/>
</dbReference>
<dbReference type="RefSeq" id="XP_040504891.1">
    <property type="nucleotide sequence ID" value="XM_040648957.2"/>
</dbReference>
<dbReference type="RefSeq" id="XP_040504892.1">
    <property type="nucleotide sequence ID" value="XM_040648958.2"/>
</dbReference>
<dbReference type="RefSeq" id="XP_046757622.1">
    <property type="nucleotide sequence ID" value="XM_046901666.1"/>
</dbReference>
<dbReference type="RefSeq" id="XP_046784714.1">
    <property type="nucleotide sequence ID" value="XM_046928758.1"/>
</dbReference>
<dbReference type="RefSeq" id="XP_046784715.1">
    <property type="nucleotide sequence ID" value="XM_046928759.1"/>
</dbReference>
<dbReference type="RefSeq" id="XP_046784716.1">
    <property type="nucleotide sequence ID" value="XM_046928760.1"/>
</dbReference>
<dbReference type="RefSeq" id="XP_046784718.1">
    <property type="nucleotide sequence ID" value="XM_046928762.1"/>
</dbReference>
<dbReference type="RefSeq" id="XP_046784719.1">
    <property type="nucleotide sequence ID" value="XM_046928763.1"/>
</dbReference>
<dbReference type="SMR" id="P05081"/>
<dbReference type="FunCoup" id="P05081">
    <property type="interactions" value="1235"/>
</dbReference>
<dbReference type="STRING" id="9031.ENSGALP00000067246"/>
<dbReference type="PaxDb" id="9031-ENSGALP00000042094"/>
<dbReference type="Ensembl" id="ENSGALT00010068048.1">
    <property type="protein sequence ID" value="ENSGALP00010041791.1"/>
    <property type="gene ID" value="ENSGALG00010028082.1"/>
</dbReference>
<dbReference type="GeneID" id="396002"/>
<dbReference type="KEGG" id="gga:396002"/>
<dbReference type="CTD" id="203"/>
<dbReference type="VEuPathDB" id="HostDB:geneid_396002"/>
<dbReference type="eggNOG" id="KOG3079">
    <property type="taxonomic scope" value="Eukaryota"/>
</dbReference>
<dbReference type="GeneTree" id="ENSGT00940000158325"/>
<dbReference type="HOGENOM" id="CLU_032354_0_3_1"/>
<dbReference type="InParanoid" id="P05081"/>
<dbReference type="OMA" id="GTQCDRM"/>
<dbReference type="OrthoDB" id="442176at2759"/>
<dbReference type="PhylomeDB" id="P05081"/>
<dbReference type="BRENDA" id="2.7.4.3">
    <property type="organism ID" value="1306"/>
</dbReference>
<dbReference type="Reactome" id="R-GGA-499943">
    <property type="pathway name" value="Interconversion of nucleotide di- and triphosphates"/>
</dbReference>
<dbReference type="SABIO-RK" id="P05081"/>
<dbReference type="PRO" id="PR:P05081"/>
<dbReference type="Proteomes" id="UP000000539">
    <property type="component" value="Chromosome 17"/>
</dbReference>
<dbReference type="Bgee" id="ENSGALG00000029150">
    <property type="expression patterns" value="Expressed in muscle tissue and 14 other cell types or tissues"/>
</dbReference>
<dbReference type="GO" id="GO:0005737">
    <property type="term" value="C:cytoplasm"/>
    <property type="evidence" value="ECO:0000318"/>
    <property type="project" value="GO_Central"/>
</dbReference>
<dbReference type="GO" id="GO:0005829">
    <property type="term" value="C:cytosol"/>
    <property type="evidence" value="ECO:0000314"/>
    <property type="project" value="UniProtKB"/>
</dbReference>
<dbReference type="GO" id="GO:0004017">
    <property type="term" value="F:adenylate kinase activity"/>
    <property type="evidence" value="ECO:0000314"/>
    <property type="project" value="UniProtKB"/>
</dbReference>
<dbReference type="GO" id="GO:0005524">
    <property type="term" value="F:ATP binding"/>
    <property type="evidence" value="ECO:0007669"/>
    <property type="project" value="UniProtKB-KW"/>
</dbReference>
<dbReference type="GO" id="GO:0047506">
    <property type="term" value="F:deoxyadenylate kinase activity"/>
    <property type="evidence" value="ECO:0007669"/>
    <property type="project" value="RHEA"/>
</dbReference>
<dbReference type="GO" id="GO:0000287">
    <property type="term" value="F:magnesium ion binding"/>
    <property type="evidence" value="ECO:0000304"/>
    <property type="project" value="UniProtKB"/>
</dbReference>
<dbReference type="GO" id="GO:0004550">
    <property type="term" value="F:nucleoside diphosphate kinase activity"/>
    <property type="evidence" value="ECO:0000250"/>
    <property type="project" value="UniProtKB"/>
</dbReference>
<dbReference type="GO" id="GO:0006172">
    <property type="term" value="P:ADP biosynthetic process"/>
    <property type="evidence" value="ECO:0007669"/>
    <property type="project" value="UniProtKB-UniRule"/>
</dbReference>
<dbReference type="GO" id="GO:0046033">
    <property type="term" value="P:AMP metabolic process"/>
    <property type="evidence" value="ECO:0007669"/>
    <property type="project" value="UniProtKB-UniRule"/>
</dbReference>
<dbReference type="GO" id="GO:0046034">
    <property type="term" value="P:ATP metabolic process"/>
    <property type="evidence" value="ECO:0007669"/>
    <property type="project" value="UniProtKB-UniRule"/>
</dbReference>
<dbReference type="GO" id="GO:0009142">
    <property type="term" value="P:nucleoside triphosphate biosynthetic process"/>
    <property type="evidence" value="ECO:0007669"/>
    <property type="project" value="InterPro"/>
</dbReference>
<dbReference type="CDD" id="cd01428">
    <property type="entry name" value="ADK"/>
    <property type="match status" value="1"/>
</dbReference>
<dbReference type="FunFam" id="3.40.50.300:FF:000315">
    <property type="entry name" value="Adenylate kinase 1"/>
    <property type="match status" value="1"/>
</dbReference>
<dbReference type="Gene3D" id="3.40.50.300">
    <property type="entry name" value="P-loop containing nucleotide triphosphate hydrolases"/>
    <property type="match status" value="1"/>
</dbReference>
<dbReference type="HAMAP" id="MF_00235">
    <property type="entry name" value="Adenylate_kinase_Adk"/>
    <property type="match status" value="1"/>
</dbReference>
<dbReference type="HAMAP" id="MF_03171">
    <property type="entry name" value="Adenylate_kinase_AK1"/>
    <property type="match status" value="1"/>
</dbReference>
<dbReference type="InterPro" id="IPR000850">
    <property type="entry name" value="Adenylat/UMP-CMP_kin"/>
</dbReference>
<dbReference type="InterPro" id="IPR033690">
    <property type="entry name" value="Adenylat_kinase_CS"/>
</dbReference>
<dbReference type="InterPro" id="IPR028582">
    <property type="entry name" value="AK1"/>
</dbReference>
<dbReference type="InterPro" id="IPR006267">
    <property type="entry name" value="AK1/5"/>
</dbReference>
<dbReference type="InterPro" id="IPR027417">
    <property type="entry name" value="P-loop_NTPase"/>
</dbReference>
<dbReference type="NCBIfam" id="TIGR01360">
    <property type="entry name" value="aden_kin_iso1"/>
    <property type="match status" value="1"/>
</dbReference>
<dbReference type="NCBIfam" id="NF011100">
    <property type="entry name" value="PRK14527.1"/>
    <property type="match status" value="1"/>
</dbReference>
<dbReference type="PANTHER" id="PTHR23359">
    <property type="entry name" value="NUCLEOTIDE KINASE"/>
    <property type="match status" value="1"/>
</dbReference>
<dbReference type="Pfam" id="PF00406">
    <property type="entry name" value="ADK"/>
    <property type="match status" value="1"/>
</dbReference>
<dbReference type="PRINTS" id="PR00094">
    <property type="entry name" value="ADENYLTKNASE"/>
</dbReference>
<dbReference type="SUPFAM" id="SSF52540">
    <property type="entry name" value="P-loop containing nucleoside triphosphate hydrolases"/>
    <property type="match status" value="1"/>
</dbReference>
<dbReference type="PROSITE" id="PS00113">
    <property type="entry name" value="ADENYLATE_KINASE"/>
    <property type="match status" value="1"/>
</dbReference>